<evidence type="ECO:0000255" key="1">
    <source>
        <dbReference type="HAMAP-Rule" id="MF_00176"/>
    </source>
</evidence>
<accession>Q47TZ5</accession>
<sequence length="422" mass="46877">MIDLRALREDPDRLRASQRARGEDESVVDRLLDLDSRHRAALARFETLRAEQKSVGKSVSRASAEEREALLNRAKSLASEVKSAEAEAEALSDELTTLLRSVPNVVESDAPVGGVDDFVVVEEVGTPRQFDFTPRDHLELGEMLGAIDTERGAKVSGARFYFLTGVGALLELGLLNLAMQRAVANGFTPMIPPVLVKPETMDGTGFLGEHAAEVYHLPADDLYLVGTSEVPLAGYHANEILPADALPTRYIGWSSCFRREAGSYGKDTRGIIRVHQFNKVEMFVYAHPDEAHEEHLRLLAWEREMLDLIEVPYRVVDIAAGDLGTSAARKYDCEAWLPSQGRYRELTSTSNCTEFQSRRLNIRYRDTDGKPRFVATLNGTLATTRWIVAILENHQQEDGSVVVPEALRPFVGQDVLHPIAKK</sequence>
<gene>
    <name evidence="1" type="primary">serS</name>
    <name type="ordered locus">Tfu_0031</name>
</gene>
<feature type="chain" id="PRO_1000019855" description="Serine--tRNA ligase">
    <location>
        <begin position="1"/>
        <end position="422"/>
    </location>
</feature>
<feature type="binding site" evidence="1">
    <location>
        <begin position="227"/>
        <end position="229"/>
    </location>
    <ligand>
        <name>L-serine</name>
        <dbReference type="ChEBI" id="CHEBI:33384"/>
    </ligand>
</feature>
<feature type="binding site" evidence="1">
    <location>
        <begin position="258"/>
        <end position="260"/>
    </location>
    <ligand>
        <name>ATP</name>
        <dbReference type="ChEBI" id="CHEBI:30616"/>
    </ligand>
</feature>
<feature type="binding site" evidence="1">
    <location>
        <position position="274"/>
    </location>
    <ligand>
        <name>ATP</name>
        <dbReference type="ChEBI" id="CHEBI:30616"/>
    </ligand>
</feature>
<feature type="binding site" evidence="1">
    <location>
        <position position="281"/>
    </location>
    <ligand>
        <name>L-serine</name>
        <dbReference type="ChEBI" id="CHEBI:33384"/>
    </ligand>
</feature>
<feature type="binding site" evidence="1">
    <location>
        <begin position="345"/>
        <end position="348"/>
    </location>
    <ligand>
        <name>ATP</name>
        <dbReference type="ChEBI" id="CHEBI:30616"/>
    </ligand>
</feature>
<feature type="binding site" evidence="1">
    <location>
        <position position="380"/>
    </location>
    <ligand>
        <name>L-serine</name>
        <dbReference type="ChEBI" id="CHEBI:33384"/>
    </ligand>
</feature>
<comment type="function">
    <text evidence="1">Catalyzes the attachment of serine to tRNA(Ser). Is also able to aminoacylate tRNA(Sec) with serine, to form the misacylated tRNA L-seryl-tRNA(Sec), which will be further converted into selenocysteinyl-tRNA(Sec).</text>
</comment>
<comment type="catalytic activity">
    <reaction evidence="1">
        <text>tRNA(Ser) + L-serine + ATP = L-seryl-tRNA(Ser) + AMP + diphosphate + H(+)</text>
        <dbReference type="Rhea" id="RHEA:12292"/>
        <dbReference type="Rhea" id="RHEA-COMP:9669"/>
        <dbReference type="Rhea" id="RHEA-COMP:9703"/>
        <dbReference type="ChEBI" id="CHEBI:15378"/>
        <dbReference type="ChEBI" id="CHEBI:30616"/>
        <dbReference type="ChEBI" id="CHEBI:33019"/>
        <dbReference type="ChEBI" id="CHEBI:33384"/>
        <dbReference type="ChEBI" id="CHEBI:78442"/>
        <dbReference type="ChEBI" id="CHEBI:78533"/>
        <dbReference type="ChEBI" id="CHEBI:456215"/>
        <dbReference type="EC" id="6.1.1.11"/>
    </reaction>
</comment>
<comment type="catalytic activity">
    <reaction evidence="1">
        <text>tRNA(Sec) + L-serine + ATP = L-seryl-tRNA(Sec) + AMP + diphosphate + H(+)</text>
        <dbReference type="Rhea" id="RHEA:42580"/>
        <dbReference type="Rhea" id="RHEA-COMP:9742"/>
        <dbReference type="Rhea" id="RHEA-COMP:10128"/>
        <dbReference type="ChEBI" id="CHEBI:15378"/>
        <dbReference type="ChEBI" id="CHEBI:30616"/>
        <dbReference type="ChEBI" id="CHEBI:33019"/>
        <dbReference type="ChEBI" id="CHEBI:33384"/>
        <dbReference type="ChEBI" id="CHEBI:78442"/>
        <dbReference type="ChEBI" id="CHEBI:78533"/>
        <dbReference type="ChEBI" id="CHEBI:456215"/>
        <dbReference type="EC" id="6.1.1.11"/>
    </reaction>
</comment>
<comment type="pathway">
    <text evidence="1">Aminoacyl-tRNA biosynthesis; selenocysteinyl-tRNA(Sec) biosynthesis; L-seryl-tRNA(Sec) from L-serine and tRNA(Sec): step 1/1.</text>
</comment>
<comment type="subunit">
    <text evidence="1">Homodimer. The tRNA molecule binds across the dimer.</text>
</comment>
<comment type="subcellular location">
    <subcellularLocation>
        <location evidence="1">Cytoplasm</location>
    </subcellularLocation>
</comment>
<comment type="domain">
    <text evidence="1">Consists of two distinct domains, a catalytic core and a N-terminal extension that is involved in tRNA binding.</text>
</comment>
<comment type="similarity">
    <text evidence="1">Belongs to the class-II aminoacyl-tRNA synthetase family. Type-1 seryl-tRNA synthetase subfamily.</text>
</comment>
<name>SYS_THEFY</name>
<keyword id="KW-0030">Aminoacyl-tRNA synthetase</keyword>
<keyword id="KW-0067">ATP-binding</keyword>
<keyword id="KW-0963">Cytoplasm</keyword>
<keyword id="KW-0436">Ligase</keyword>
<keyword id="KW-0547">Nucleotide-binding</keyword>
<keyword id="KW-0648">Protein biosynthesis</keyword>
<reference key="1">
    <citation type="journal article" date="2007" name="J. Bacteriol.">
        <title>Genome sequence and analysis of the soil cellulolytic actinomycete Thermobifida fusca YX.</title>
        <authorList>
            <person name="Lykidis A."/>
            <person name="Mavromatis K."/>
            <person name="Ivanova N."/>
            <person name="Anderson I."/>
            <person name="Land M."/>
            <person name="DiBartolo G."/>
            <person name="Martinez M."/>
            <person name="Lapidus A."/>
            <person name="Lucas S."/>
            <person name="Copeland A."/>
            <person name="Richardson P."/>
            <person name="Wilson D.B."/>
            <person name="Kyrpides N."/>
        </authorList>
    </citation>
    <scope>NUCLEOTIDE SEQUENCE [LARGE SCALE GENOMIC DNA]</scope>
    <source>
        <strain>YX</strain>
    </source>
</reference>
<protein>
    <recommendedName>
        <fullName evidence="1">Serine--tRNA ligase</fullName>
        <ecNumber evidence="1">6.1.1.11</ecNumber>
    </recommendedName>
    <alternativeName>
        <fullName evidence="1">Seryl-tRNA synthetase</fullName>
        <shortName evidence="1">SerRS</shortName>
    </alternativeName>
    <alternativeName>
        <fullName evidence="1">Seryl-tRNA(Ser/Sec) synthetase</fullName>
    </alternativeName>
</protein>
<organism>
    <name type="scientific">Thermobifida fusca (strain YX)</name>
    <dbReference type="NCBI Taxonomy" id="269800"/>
    <lineage>
        <taxon>Bacteria</taxon>
        <taxon>Bacillati</taxon>
        <taxon>Actinomycetota</taxon>
        <taxon>Actinomycetes</taxon>
        <taxon>Streptosporangiales</taxon>
        <taxon>Nocardiopsidaceae</taxon>
        <taxon>Thermobifida</taxon>
    </lineage>
</organism>
<proteinExistence type="inferred from homology"/>
<dbReference type="EC" id="6.1.1.11" evidence="1"/>
<dbReference type="EMBL" id="CP000088">
    <property type="protein sequence ID" value="AAZ54069.1"/>
    <property type="molecule type" value="Genomic_DNA"/>
</dbReference>
<dbReference type="RefSeq" id="WP_011290478.1">
    <property type="nucleotide sequence ID" value="NC_007333.1"/>
</dbReference>
<dbReference type="SMR" id="Q47TZ5"/>
<dbReference type="STRING" id="269800.Tfu_0031"/>
<dbReference type="KEGG" id="tfu:Tfu_0031"/>
<dbReference type="eggNOG" id="COG0172">
    <property type="taxonomic scope" value="Bacteria"/>
</dbReference>
<dbReference type="HOGENOM" id="CLU_023797_0_1_11"/>
<dbReference type="OrthoDB" id="9804647at2"/>
<dbReference type="UniPathway" id="UPA00906">
    <property type="reaction ID" value="UER00895"/>
</dbReference>
<dbReference type="GO" id="GO:0005737">
    <property type="term" value="C:cytoplasm"/>
    <property type="evidence" value="ECO:0007669"/>
    <property type="project" value="UniProtKB-SubCell"/>
</dbReference>
<dbReference type="GO" id="GO:0005524">
    <property type="term" value="F:ATP binding"/>
    <property type="evidence" value="ECO:0007669"/>
    <property type="project" value="UniProtKB-UniRule"/>
</dbReference>
<dbReference type="GO" id="GO:0004828">
    <property type="term" value="F:serine-tRNA ligase activity"/>
    <property type="evidence" value="ECO:0007669"/>
    <property type="project" value="UniProtKB-UniRule"/>
</dbReference>
<dbReference type="GO" id="GO:0016260">
    <property type="term" value="P:selenocysteine biosynthetic process"/>
    <property type="evidence" value="ECO:0007669"/>
    <property type="project" value="UniProtKB-UniRule"/>
</dbReference>
<dbReference type="GO" id="GO:0006434">
    <property type="term" value="P:seryl-tRNA aminoacylation"/>
    <property type="evidence" value="ECO:0007669"/>
    <property type="project" value="UniProtKB-UniRule"/>
</dbReference>
<dbReference type="CDD" id="cd00770">
    <property type="entry name" value="SerRS_core"/>
    <property type="match status" value="1"/>
</dbReference>
<dbReference type="FunFam" id="3.30.930.10:FF:000048">
    <property type="entry name" value="Serine--tRNA ligase"/>
    <property type="match status" value="1"/>
</dbReference>
<dbReference type="Gene3D" id="3.30.930.10">
    <property type="entry name" value="Bira Bifunctional Protein, Domain 2"/>
    <property type="match status" value="1"/>
</dbReference>
<dbReference type="Gene3D" id="1.10.287.40">
    <property type="entry name" value="Serine-tRNA synthetase, tRNA binding domain"/>
    <property type="match status" value="1"/>
</dbReference>
<dbReference type="HAMAP" id="MF_00176">
    <property type="entry name" value="Ser_tRNA_synth_type1"/>
    <property type="match status" value="1"/>
</dbReference>
<dbReference type="InterPro" id="IPR002314">
    <property type="entry name" value="aa-tRNA-synt_IIb"/>
</dbReference>
<dbReference type="InterPro" id="IPR006195">
    <property type="entry name" value="aa-tRNA-synth_II"/>
</dbReference>
<dbReference type="InterPro" id="IPR045864">
    <property type="entry name" value="aa-tRNA-synth_II/BPL/LPL"/>
</dbReference>
<dbReference type="InterPro" id="IPR002317">
    <property type="entry name" value="Ser-tRNA-ligase_type_1"/>
</dbReference>
<dbReference type="InterPro" id="IPR015866">
    <property type="entry name" value="Ser-tRNA-synth_1_N"/>
</dbReference>
<dbReference type="InterPro" id="IPR042103">
    <property type="entry name" value="SerRS_1_N_sf"/>
</dbReference>
<dbReference type="InterPro" id="IPR033729">
    <property type="entry name" value="SerRS_core"/>
</dbReference>
<dbReference type="InterPro" id="IPR010978">
    <property type="entry name" value="tRNA-bd_arm"/>
</dbReference>
<dbReference type="NCBIfam" id="TIGR00414">
    <property type="entry name" value="serS"/>
    <property type="match status" value="1"/>
</dbReference>
<dbReference type="PANTHER" id="PTHR11778">
    <property type="entry name" value="SERYL-TRNA SYNTHETASE"/>
    <property type="match status" value="1"/>
</dbReference>
<dbReference type="Pfam" id="PF02403">
    <property type="entry name" value="Seryl_tRNA_N"/>
    <property type="match status" value="1"/>
</dbReference>
<dbReference type="Pfam" id="PF00587">
    <property type="entry name" value="tRNA-synt_2b"/>
    <property type="match status" value="1"/>
</dbReference>
<dbReference type="PIRSF" id="PIRSF001529">
    <property type="entry name" value="Ser-tRNA-synth_IIa"/>
    <property type="match status" value="1"/>
</dbReference>
<dbReference type="PRINTS" id="PR00981">
    <property type="entry name" value="TRNASYNTHSER"/>
</dbReference>
<dbReference type="SUPFAM" id="SSF55681">
    <property type="entry name" value="Class II aaRS and biotin synthetases"/>
    <property type="match status" value="1"/>
</dbReference>
<dbReference type="SUPFAM" id="SSF46589">
    <property type="entry name" value="tRNA-binding arm"/>
    <property type="match status" value="1"/>
</dbReference>
<dbReference type="PROSITE" id="PS50862">
    <property type="entry name" value="AA_TRNA_LIGASE_II"/>
    <property type="match status" value="1"/>
</dbReference>